<protein>
    <recommendedName>
        <fullName>p21-activated protein kinase-interacting protein 1-like</fullName>
    </recommendedName>
    <alternativeName>
        <fullName>PAK1-interacting protein 1-like</fullName>
    </alternativeName>
</protein>
<dbReference type="EMBL" id="BC079760">
    <property type="protein sequence ID" value="AAH79760.1"/>
    <property type="molecule type" value="mRNA"/>
</dbReference>
<dbReference type="RefSeq" id="NP_001087421.1">
    <property type="nucleotide sequence ID" value="NM_001093952.1"/>
</dbReference>
<dbReference type="SMR" id="Q68FJ6"/>
<dbReference type="DNASU" id="447245"/>
<dbReference type="GeneID" id="447245"/>
<dbReference type="KEGG" id="xla:447245"/>
<dbReference type="AGR" id="Xenbase:XB-GENE-866133"/>
<dbReference type="CTD" id="447245"/>
<dbReference type="Xenbase" id="XB-GENE-866133">
    <property type="gene designation" value="pak1ip1.S"/>
</dbReference>
<dbReference type="OrthoDB" id="308449at2759"/>
<dbReference type="Proteomes" id="UP000186698">
    <property type="component" value="Chromosome 6S"/>
</dbReference>
<dbReference type="Bgee" id="447245">
    <property type="expression patterns" value="Expressed in neurula embryo and 19 other cell types or tissues"/>
</dbReference>
<dbReference type="GO" id="GO:0005730">
    <property type="term" value="C:nucleolus"/>
    <property type="evidence" value="ECO:0000318"/>
    <property type="project" value="GO_Central"/>
</dbReference>
<dbReference type="GO" id="GO:0004860">
    <property type="term" value="F:protein kinase inhibitor activity"/>
    <property type="evidence" value="ECO:0000318"/>
    <property type="project" value="GO_Central"/>
</dbReference>
<dbReference type="GO" id="GO:0000463">
    <property type="term" value="P:maturation of LSU-rRNA from tricistronic rRNA transcript (SSU-rRNA, 5.8S rRNA, LSU-rRNA)"/>
    <property type="evidence" value="ECO:0000318"/>
    <property type="project" value="GO_Central"/>
</dbReference>
<dbReference type="GO" id="GO:0009968">
    <property type="term" value="P:negative regulation of signal transduction"/>
    <property type="evidence" value="ECO:0007669"/>
    <property type="project" value="UniProtKB-KW"/>
</dbReference>
<dbReference type="GO" id="GO:0042273">
    <property type="term" value="P:ribosomal large subunit biogenesis"/>
    <property type="evidence" value="ECO:0000250"/>
    <property type="project" value="UniProtKB"/>
</dbReference>
<dbReference type="FunFam" id="2.130.10.10:FF:000424">
    <property type="entry name" value="p21-activated protein kinase-interacting protein 1-like"/>
    <property type="match status" value="1"/>
</dbReference>
<dbReference type="FunFam" id="2.130.10.10:FF:002329">
    <property type="entry name" value="p21-activated protein kinase-interacting protein 1-like"/>
    <property type="match status" value="1"/>
</dbReference>
<dbReference type="Gene3D" id="2.130.10.10">
    <property type="entry name" value="YVTN repeat-like/Quinoprotein amine dehydrogenase"/>
    <property type="match status" value="2"/>
</dbReference>
<dbReference type="InterPro" id="IPR051959">
    <property type="entry name" value="PAK1-Kinase_Regulator"/>
</dbReference>
<dbReference type="InterPro" id="IPR015943">
    <property type="entry name" value="WD40/YVTN_repeat-like_dom_sf"/>
</dbReference>
<dbReference type="InterPro" id="IPR019775">
    <property type="entry name" value="WD40_repeat_CS"/>
</dbReference>
<dbReference type="InterPro" id="IPR036322">
    <property type="entry name" value="WD40_repeat_dom_sf"/>
</dbReference>
<dbReference type="InterPro" id="IPR001680">
    <property type="entry name" value="WD40_rpt"/>
</dbReference>
<dbReference type="PANTHER" id="PTHR44675:SF1">
    <property type="entry name" value="P21-ACTIVATED PROTEIN KINASE-INTERACTING PROTEIN 1"/>
    <property type="match status" value="1"/>
</dbReference>
<dbReference type="PANTHER" id="PTHR44675">
    <property type="entry name" value="PAK1 INTERACTING PROTEIN 1"/>
    <property type="match status" value="1"/>
</dbReference>
<dbReference type="Pfam" id="PF00400">
    <property type="entry name" value="WD40"/>
    <property type="match status" value="4"/>
</dbReference>
<dbReference type="SMART" id="SM00320">
    <property type="entry name" value="WD40"/>
    <property type="match status" value="5"/>
</dbReference>
<dbReference type="SUPFAM" id="SSF50978">
    <property type="entry name" value="WD40 repeat-like"/>
    <property type="match status" value="1"/>
</dbReference>
<dbReference type="PROSITE" id="PS00678">
    <property type="entry name" value="WD_REPEATS_1"/>
    <property type="match status" value="2"/>
</dbReference>
<dbReference type="PROSITE" id="PS50082">
    <property type="entry name" value="WD_REPEATS_2"/>
    <property type="match status" value="4"/>
</dbReference>
<dbReference type="PROSITE" id="PS50294">
    <property type="entry name" value="WD_REPEATS_REGION"/>
    <property type="match status" value="1"/>
</dbReference>
<proteinExistence type="evidence at transcript level"/>
<accession>Q68FJ6</accession>
<name>PK1IP_XENLA</name>
<sequence>MEESIKLLVGCYEQVLFGYRVHREGEQWLSSADFTHHAHTASVSVLAVNNRFVATGSRDETIQIYDMKKKVEHGALLHHNGTITCLEFYGNTHLLSGAEDGLICVWNTKKWECQQTFKAHKGQVLSLSIHPSGKLALSVGTDKTLRTWNLVEGRSAFIKNIKKNAHIVHWSPSGEKYVVVIHDTVDVYQLETAAVVGTINNPKRISSAQFITDALIAVAGDEEVIRLYDTASQKCVCEFKAHENRVKNLHVIELQGTHVVVSSSSDGYIKMWRIDMEKVQTSPSLLCEVSTSARLTCLSAWLPSGVDHKEKSNTAVTASAVKDCDRPKKKKAQNETTDKEASETQVVHKKRKPETKQKKKKPS</sequence>
<gene>
    <name type="primary">pak1ip1</name>
</gene>
<reference key="1">
    <citation type="submission" date="2004-08" db="EMBL/GenBank/DDBJ databases">
        <authorList>
            <consortium name="NIH - Xenopus Gene Collection (XGC) project"/>
        </authorList>
    </citation>
    <scope>NUCLEOTIDE SEQUENCE [LARGE SCALE MRNA]</scope>
    <source>
        <tissue>Eye</tissue>
    </source>
</reference>
<feature type="chain" id="PRO_0000051129" description="p21-activated protein kinase-interacting protein 1-like">
    <location>
        <begin position="1"/>
        <end position="363"/>
    </location>
</feature>
<feature type="repeat" description="WD 1">
    <location>
        <begin position="38"/>
        <end position="75"/>
    </location>
</feature>
<feature type="repeat" description="WD 2">
    <location>
        <begin position="78"/>
        <end position="116"/>
    </location>
</feature>
<feature type="repeat" description="WD 3">
    <location>
        <begin position="119"/>
        <end position="158"/>
    </location>
</feature>
<feature type="repeat" description="WD 4">
    <location>
        <begin position="200"/>
        <end position="238"/>
    </location>
</feature>
<feature type="repeat" description="WD 5">
    <location>
        <begin position="241"/>
        <end position="282"/>
    </location>
</feature>
<feature type="region of interest" description="Disordered" evidence="2">
    <location>
        <begin position="309"/>
        <end position="363"/>
    </location>
</feature>
<feature type="compositionally biased region" description="Basic and acidic residues" evidence="2">
    <location>
        <begin position="322"/>
        <end position="342"/>
    </location>
</feature>
<feature type="compositionally biased region" description="Basic residues" evidence="2">
    <location>
        <begin position="347"/>
        <end position="363"/>
    </location>
</feature>
<organism>
    <name type="scientific">Xenopus laevis</name>
    <name type="common">African clawed frog</name>
    <dbReference type="NCBI Taxonomy" id="8355"/>
    <lineage>
        <taxon>Eukaryota</taxon>
        <taxon>Metazoa</taxon>
        <taxon>Chordata</taxon>
        <taxon>Craniata</taxon>
        <taxon>Vertebrata</taxon>
        <taxon>Euteleostomi</taxon>
        <taxon>Amphibia</taxon>
        <taxon>Batrachia</taxon>
        <taxon>Anura</taxon>
        <taxon>Pipoidea</taxon>
        <taxon>Pipidae</taxon>
        <taxon>Xenopodinae</taxon>
        <taxon>Xenopus</taxon>
        <taxon>Xenopus</taxon>
    </lineage>
</organism>
<comment type="function">
    <text evidence="1">Negatively regulates the PAK1 kinase. PAK1 is a member of the PAK kinase family, which has been shown to play a positive role in the regulation of signaling pathways involving MAPK8 and RELA. PAK1 exists as an inactive homodimer, which is activated by binding of small GTPases such as CDC42 to an N-terminal regulatory domain. PAK1IP1 also binds to the N-terminus of PAK1, and inhibits the specific activation of PAK1 by CDC42. May be involved in ribosomal large subunit assembly.</text>
</comment>
<comment type="subcellular location">
    <subcellularLocation>
        <location evidence="1">Nucleus</location>
        <location evidence="1">Nucleolus</location>
    </subcellularLocation>
</comment>
<evidence type="ECO:0000250" key="1">
    <source>
        <dbReference type="UniProtKB" id="Q9NWT1"/>
    </source>
</evidence>
<evidence type="ECO:0000256" key="2">
    <source>
        <dbReference type="SAM" id="MobiDB-lite"/>
    </source>
</evidence>
<keyword id="KW-0539">Nucleus</keyword>
<keyword id="KW-1185">Reference proteome</keyword>
<keyword id="KW-0677">Repeat</keyword>
<keyword id="KW-0690">Ribosome biogenesis</keyword>
<keyword id="KW-0734">Signal transduction inhibitor</keyword>
<keyword id="KW-0853">WD repeat</keyword>